<evidence type="ECO:0000255" key="1">
    <source>
        <dbReference type="HAMAP-Rule" id="MF_00110"/>
    </source>
</evidence>
<protein>
    <recommendedName>
        <fullName evidence="1">3-dehydroquinate synthase</fullName>
        <shortName evidence="1">DHQS</shortName>
        <ecNumber evidence="1">4.2.3.4</ecNumber>
    </recommendedName>
</protein>
<proteinExistence type="inferred from homology"/>
<feature type="chain" id="PRO_1000117487" description="3-dehydroquinate synthase">
    <location>
        <begin position="1"/>
        <end position="362"/>
    </location>
</feature>
<feature type="binding site" evidence="1">
    <location>
        <begin position="71"/>
        <end position="76"/>
    </location>
    <ligand>
        <name>NAD(+)</name>
        <dbReference type="ChEBI" id="CHEBI:57540"/>
    </ligand>
</feature>
<feature type="binding site" evidence="1">
    <location>
        <begin position="105"/>
        <end position="109"/>
    </location>
    <ligand>
        <name>NAD(+)</name>
        <dbReference type="ChEBI" id="CHEBI:57540"/>
    </ligand>
</feature>
<feature type="binding site" evidence="1">
    <location>
        <begin position="129"/>
        <end position="130"/>
    </location>
    <ligand>
        <name>NAD(+)</name>
        <dbReference type="ChEBI" id="CHEBI:57540"/>
    </ligand>
</feature>
<feature type="binding site" evidence="1">
    <location>
        <position position="142"/>
    </location>
    <ligand>
        <name>NAD(+)</name>
        <dbReference type="ChEBI" id="CHEBI:57540"/>
    </ligand>
</feature>
<feature type="binding site" evidence="1">
    <location>
        <position position="151"/>
    </location>
    <ligand>
        <name>NAD(+)</name>
        <dbReference type="ChEBI" id="CHEBI:57540"/>
    </ligand>
</feature>
<feature type="binding site" evidence="1">
    <location>
        <begin position="169"/>
        <end position="172"/>
    </location>
    <ligand>
        <name>NAD(+)</name>
        <dbReference type="ChEBI" id="CHEBI:57540"/>
    </ligand>
</feature>
<feature type="binding site" evidence="1">
    <location>
        <position position="184"/>
    </location>
    <ligand>
        <name>Zn(2+)</name>
        <dbReference type="ChEBI" id="CHEBI:29105"/>
    </ligand>
</feature>
<feature type="binding site" evidence="1">
    <location>
        <position position="247"/>
    </location>
    <ligand>
        <name>Zn(2+)</name>
        <dbReference type="ChEBI" id="CHEBI:29105"/>
    </ligand>
</feature>
<feature type="binding site" evidence="1">
    <location>
        <position position="264"/>
    </location>
    <ligand>
        <name>Zn(2+)</name>
        <dbReference type="ChEBI" id="CHEBI:29105"/>
    </ligand>
</feature>
<dbReference type="EC" id="4.2.3.4" evidence="1"/>
<dbReference type="EMBL" id="CU928163">
    <property type="protein sequence ID" value="CAR14993.1"/>
    <property type="molecule type" value="Genomic_DNA"/>
</dbReference>
<dbReference type="RefSeq" id="WP_000439850.1">
    <property type="nucleotide sequence ID" value="NC_011751.1"/>
</dbReference>
<dbReference type="RefSeq" id="YP_002414498.1">
    <property type="nucleotide sequence ID" value="NC_011751.1"/>
</dbReference>
<dbReference type="SMR" id="B7NDZ3"/>
<dbReference type="STRING" id="585056.ECUMN_3847"/>
<dbReference type="KEGG" id="eum:ECUMN_3847"/>
<dbReference type="PATRIC" id="fig|585056.7.peg.4018"/>
<dbReference type="HOGENOM" id="CLU_001201_0_2_6"/>
<dbReference type="UniPathway" id="UPA00053">
    <property type="reaction ID" value="UER00085"/>
</dbReference>
<dbReference type="Proteomes" id="UP000007097">
    <property type="component" value="Chromosome"/>
</dbReference>
<dbReference type="GO" id="GO:0005737">
    <property type="term" value="C:cytoplasm"/>
    <property type="evidence" value="ECO:0007669"/>
    <property type="project" value="UniProtKB-SubCell"/>
</dbReference>
<dbReference type="GO" id="GO:0003856">
    <property type="term" value="F:3-dehydroquinate synthase activity"/>
    <property type="evidence" value="ECO:0007669"/>
    <property type="project" value="UniProtKB-UniRule"/>
</dbReference>
<dbReference type="GO" id="GO:0046872">
    <property type="term" value="F:metal ion binding"/>
    <property type="evidence" value="ECO:0007669"/>
    <property type="project" value="UniProtKB-KW"/>
</dbReference>
<dbReference type="GO" id="GO:0000166">
    <property type="term" value="F:nucleotide binding"/>
    <property type="evidence" value="ECO:0007669"/>
    <property type="project" value="UniProtKB-KW"/>
</dbReference>
<dbReference type="GO" id="GO:0008652">
    <property type="term" value="P:amino acid biosynthetic process"/>
    <property type="evidence" value="ECO:0007669"/>
    <property type="project" value="UniProtKB-KW"/>
</dbReference>
<dbReference type="GO" id="GO:0009073">
    <property type="term" value="P:aromatic amino acid family biosynthetic process"/>
    <property type="evidence" value="ECO:0007669"/>
    <property type="project" value="UniProtKB-KW"/>
</dbReference>
<dbReference type="GO" id="GO:0009423">
    <property type="term" value="P:chorismate biosynthetic process"/>
    <property type="evidence" value="ECO:0007669"/>
    <property type="project" value="UniProtKB-UniRule"/>
</dbReference>
<dbReference type="CDD" id="cd08195">
    <property type="entry name" value="DHQS"/>
    <property type="match status" value="1"/>
</dbReference>
<dbReference type="FunFam" id="1.20.1090.10:FF:000002">
    <property type="entry name" value="3-dehydroquinate synthase"/>
    <property type="match status" value="1"/>
</dbReference>
<dbReference type="FunFam" id="3.40.50.1970:FF:000001">
    <property type="entry name" value="3-dehydroquinate synthase"/>
    <property type="match status" value="1"/>
</dbReference>
<dbReference type="Gene3D" id="3.40.50.1970">
    <property type="match status" value="1"/>
</dbReference>
<dbReference type="Gene3D" id="1.20.1090.10">
    <property type="entry name" value="Dehydroquinate synthase-like - alpha domain"/>
    <property type="match status" value="1"/>
</dbReference>
<dbReference type="HAMAP" id="MF_00110">
    <property type="entry name" value="DHQ_synthase"/>
    <property type="match status" value="1"/>
</dbReference>
<dbReference type="InterPro" id="IPR050071">
    <property type="entry name" value="Dehydroquinate_synthase"/>
</dbReference>
<dbReference type="InterPro" id="IPR016037">
    <property type="entry name" value="DHQ_synth_AroB"/>
</dbReference>
<dbReference type="InterPro" id="IPR030963">
    <property type="entry name" value="DHQ_synth_fam"/>
</dbReference>
<dbReference type="InterPro" id="IPR030960">
    <property type="entry name" value="DHQS/DOIS_N"/>
</dbReference>
<dbReference type="InterPro" id="IPR056179">
    <property type="entry name" value="DHQS_C"/>
</dbReference>
<dbReference type="NCBIfam" id="TIGR01357">
    <property type="entry name" value="aroB"/>
    <property type="match status" value="1"/>
</dbReference>
<dbReference type="PANTHER" id="PTHR43622">
    <property type="entry name" value="3-DEHYDROQUINATE SYNTHASE"/>
    <property type="match status" value="1"/>
</dbReference>
<dbReference type="PANTHER" id="PTHR43622:SF7">
    <property type="entry name" value="3-DEHYDROQUINATE SYNTHASE, CHLOROPLASTIC"/>
    <property type="match status" value="1"/>
</dbReference>
<dbReference type="Pfam" id="PF01761">
    <property type="entry name" value="DHQ_synthase"/>
    <property type="match status" value="1"/>
</dbReference>
<dbReference type="Pfam" id="PF24621">
    <property type="entry name" value="DHQS_C"/>
    <property type="match status" value="1"/>
</dbReference>
<dbReference type="PIRSF" id="PIRSF001455">
    <property type="entry name" value="DHQ_synth"/>
    <property type="match status" value="1"/>
</dbReference>
<dbReference type="SUPFAM" id="SSF56796">
    <property type="entry name" value="Dehydroquinate synthase-like"/>
    <property type="match status" value="1"/>
</dbReference>
<reference key="1">
    <citation type="journal article" date="2009" name="PLoS Genet.">
        <title>Organised genome dynamics in the Escherichia coli species results in highly diverse adaptive paths.</title>
        <authorList>
            <person name="Touchon M."/>
            <person name="Hoede C."/>
            <person name="Tenaillon O."/>
            <person name="Barbe V."/>
            <person name="Baeriswyl S."/>
            <person name="Bidet P."/>
            <person name="Bingen E."/>
            <person name="Bonacorsi S."/>
            <person name="Bouchier C."/>
            <person name="Bouvet O."/>
            <person name="Calteau A."/>
            <person name="Chiapello H."/>
            <person name="Clermont O."/>
            <person name="Cruveiller S."/>
            <person name="Danchin A."/>
            <person name="Diard M."/>
            <person name="Dossat C."/>
            <person name="Karoui M.E."/>
            <person name="Frapy E."/>
            <person name="Garry L."/>
            <person name="Ghigo J.M."/>
            <person name="Gilles A.M."/>
            <person name="Johnson J."/>
            <person name="Le Bouguenec C."/>
            <person name="Lescat M."/>
            <person name="Mangenot S."/>
            <person name="Martinez-Jehanne V."/>
            <person name="Matic I."/>
            <person name="Nassif X."/>
            <person name="Oztas S."/>
            <person name="Petit M.A."/>
            <person name="Pichon C."/>
            <person name="Rouy Z."/>
            <person name="Ruf C.S."/>
            <person name="Schneider D."/>
            <person name="Tourret J."/>
            <person name="Vacherie B."/>
            <person name="Vallenet D."/>
            <person name="Medigue C."/>
            <person name="Rocha E.P.C."/>
            <person name="Denamur E."/>
        </authorList>
    </citation>
    <scope>NUCLEOTIDE SEQUENCE [LARGE SCALE GENOMIC DNA]</scope>
    <source>
        <strain>UMN026 / ExPEC</strain>
    </source>
</reference>
<organism>
    <name type="scientific">Escherichia coli O17:K52:H18 (strain UMN026 / ExPEC)</name>
    <dbReference type="NCBI Taxonomy" id="585056"/>
    <lineage>
        <taxon>Bacteria</taxon>
        <taxon>Pseudomonadati</taxon>
        <taxon>Pseudomonadota</taxon>
        <taxon>Gammaproteobacteria</taxon>
        <taxon>Enterobacterales</taxon>
        <taxon>Enterobacteriaceae</taxon>
        <taxon>Escherichia</taxon>
    </lineage>
</organism>
<keyword id="KW-0028">Amino-acid biosynthesis</keyword>
<keyword id="KW-0057">Aromatic amino acid biosynthesis</keyword>
<keyword id="KW-0170">Cobalt</keyword>
<keyword id="KW-0963">Cytoplasm</keyword>
<keyword id="KW-0456">Lyase</keyword>
<keyword id="KW-0479">Metal-binding</keyword>
<keyword id="KW-0520">NAD</keyword>
<keyword id="KW-0547">Nucleotide-binding</keyword>
<keyword id="KW-0862">Zinc</keyword>
<accession>B7NDZ3</accession>
<sequence>MERIVVTLGERSYPITIASGLFNEPASFLPLKSGEQVMLVTNETLAPLYLDKVRGVLEQAGVNVDSVILPDGEQYKSLAVLDTVFTALLQKPHGRDTTLVALGGGVVGDLTGFAAASYQRGVRFIQVPTTLLSQVDSSVGGKTAVNHPLGKNMIGAFYQPASVVVDLDCLKTLPPRELASGLAEVIKYGIILDGAFFNWLEENLDALLRLDGPAMAYCIRRCCELKAEVVAADERETGLRALLNLGHTFGHAIEAEMGYGNWLHGEAVAAGMVMAARTSERLGQFSSAETQRIITLLTRAGLPVNGPREMSAQAYLPHMLRDKKVLAGEMRLILPLAIGKSEVRSGVSHELVLNAIADCQSA</sequence>
<name>AROB_ECOLU</name>
<gene>
    <name evidence="1" type="primary">aroB</name>
    <name type="ordered locus">ECUMN_3847</name>
</gene>
<comment type="function">
    <text evidence="1">Catalyzes the conversion of 3-deoxy-D-arabino-heptulosonate 7-phosphate (DAHP) to dehydroquinate (DHQ).</text>
</comment>
<comment type="catalytic activity">
    <reaction evidence="1">
        <text>7-phospho-2-dehydro-3-deoxy-D-arabino-heptonate = 3-dehydroquinate + phosphate</text>
        <dbReference type="Rhea" id="RHEA:21968"/>
        <dbReference type="ChEBI" id="CHEBI:32364"/>
        <dbReference type="ChEBI" id="CHEBI:43474"/>
        <dbReference type="ChEBI" id="CHEBI:58394"/>
        <dbReference type="EC" id="4.2.3.4"/>
    </reaction>
</comment>
<comment type="cofactor">
    <cofactor evidence="1">
        <name>Co(2+)</name>
        <dbReference type="ChEBI" id="CHEBI:48828"/>
    </cofactor>
    <cofactor evidence="1">
        <name>Zn(2+)</name>
        <dbReference type="ChEBI" id="CHEBI:29105"/>
    </cofactor>
    <text evidence="1">Binds 1 divalent metal cation per subunit. Can use either Co(2+) or Zn(2+).</text>
</comment>
<comment type="cofactor">
    <cofactor evidence="1">
        <name>NAD(+)</name>
        <dbReference type="ChEBI" id="CHEBI:57540"/>
    </cofactor>
</comment>
<comment type="pathway">
    <text evidence="1">Metabolic intermediate biosynthesis; chorismate biosynthesis; chorismate from D-erythrose 4-phosphate and phosphoenolpyruvate: step 2/7.</text>
</comment>
<comment type="subcellular location">
    <subcellularLocation>
        <location evidence="1">Cytoplasm</location>
    </subcellularLocation>
</comment>
<comment type="similarity">
    <text evidence="1">Belongs to the sugar phosphate cyclases superfamily. Dehydroquinate synthase family.</text>
</comment>